<evidence type="ECO:0000255" key="1">
    <source>
        <dbReference type="HAMAP-Rule" id="MF_00034"/>
    </source>
</evidence>
<gene>
    <name evidence="1" type="primary">ruvC</name>
    <name type="ordered locus">PBPRA1114</name>
</gene>
<dbReference type="EC" id="3.1.21.10" evidence="1"/>
<dbReference type="EMBL" id="CR378666">
    <property type="protein sequence ID" value="CAG19525.1"/>
    <property type="molecule type" value="Genomic_DNA"/>
</dbReference>
<dbReference type="RefSeq" id="WP_006231181.1">
    <property type="nucleotide sequence ID" value="NC_006370.1"/>
</dbReference>
<dbReference type="SMR" id="Q6LT51"/>
<dbReference type="STRING" id="298386.PBPRA1114"/>
<dbReference type="KEGG" id="ppr:PBPRA1114"/>
<dbReference type="eggNOG" id="COG0817">
    <property type="taxonomic scope" value="Bacteria"/>
</dbReference>
<dbReference type="HOGENOM" id="CLU_091257_2_1_6"/>
<dbReference type="Proteomes" id="UP000000593">
    <property type="component" value="Chromosome 1"/>
</dbReference>
<dbReference type="GO" id="GO:0005737">
    <property type="term" value="C:cytoplasm"/>
    <property type="evidence" value="ECO:0007669"/>
    <property type="project" value="UniProtKB-SubCell"/>
</dbReference>
<dbReference type="GO" id="GO:0048476">
    <property type="term" value="C:Holliday junction resolvase complex"/>
    <property type="evidence" value="ECO:0007669"/>
    <property type="project" value="UniProtKB-UniRule"/>
</dbReference>
<dbReference type="GO" id="GO:0008821">
    <property type="term" value="F:crossover junction DNA endonuclease activity"/>
    <property type="evidence" value="ECO:0007669"/>
    <property type="project" value="UniProtKB-UniRule"/>
</dbReference>
<dbReference type="GO" id="GO:0003677">
    <property type="term" value="F:DNA binding"/>
    <property type="evidence" value="ECO:0007669"/>
    <property type="project" value="UniProtKB-KW"/>
</dbReference>
<dbReference type="GO" id="GO:0000287">
    <property type="term" value="F:magnesium ion binding"/>
    <property type="evidence" value="ECO:0007669"/>
    <property type="project" value="UniProtKB-UniRule"/>
</dbReference>
<dbReference type="GO" id="GO:0006310">
    <property type="term" value="P:DNA recombination"/>
    <property type="evidence" value="ECO:0007669"/>
    <property type="project" value="UniProtKB-UniRule"/>
</dbReference>
<dbReference type="GO" id="GO:0006281">
    <property type="term" value="P:DNA repair"/>
    <property type="evidence" value="ECO:0007669"/>
    <property type="project" value="UniProtKB-UniRule"/>
</dbReference>
<dbReference type="CDD" id="cd16962">
    <property type="entry name" value="RuvC"/>
    <property type="match status" value="1"/>
</dbReference>
<dbReference type="FunFam" id="3.30.420.10:FF:000002">
    <property type="entry name" value="Crossover junction endodeoxyribonuclease RuvC"/>
    <property type="match status" value="1"/>
</dbReference>
<dbReference type="Gene3D" id="3.30.420.10">
    <property type="entry name" value="Ribonuclease H-like superfamily/Ribonuclease H"/>
    <property type="match status" value="1"/>
</dbReference>
<dbReference type="HAMAP" id="MF_00034">
    <property type="entry name" value="RuvC"/>
    <property type="match status" value="1"/>
</dbReference>
<dbReference type="InterPro" id="IPR012337">
    <property type="entry name" value="RNaseH-like_sf"/>
</dbReference>
<dbReference type="InterPro" id="IPR036397">
    <property type="entry name" value="RNaseH_sf"/>
</dbReference>
<dbReference type="InterPro" id="IPR020563">
    <property type="entry name" value="X-over_junc_endoDNase_Mg_BS"/>
</dbReference>
<dbReference type="InterPro" id="IPR002176">
    <property type="entry name" value="X-over_junc_endoDNase_RuvC"/>
</dbReference>
<dbReference type="NCBIfam" id="TIGR00228">
    <property type="entry name" value="ruvC"/>
    <property type="match status" value="1"/>
</dbReference>
<dbReference type="PANTHER" id="PTHR30194">
    <property type="entry name" value="CROSSOVER JUNCTION ENDODEOXYRIBONUCLEASE RUVC"/>
    <property type="match status" value="1"/>
</dbReference>
<dbReference type="PANTHER" id="PTHR30194:SF3">
    <property type="entry name" value="CROSSOVER JUNCTION ENDODEOXYRIBONUCLEASE RUVC"/>
    <property type="match status" value="1"/>
</dbReference>
<dbReference type="Pfam" id="PF02075">
    <property type="entry name" value="RuvC"/>
    <property type="match status" value="1"/>
</dbReference>
<dbReference type="PRINTS" id="PR00696">
    <property type="entry name" value="RSOLVASERUVC"/>
</dbReference>
<dbReference type="SUPFAM" id="SSF53098">
    <property type="entry name" value="Ribonuclease H-like"/>
    <property type="match status" value="1"/>
</dbReference>
<dbReference type="PROSITE" id="PS01321">
    <property type="entry name" value="RUVC"/>
    <property type="match status" value="1"/>
</dbReference>
<keyword id="KW-0963">Cytoplasm</keyword>
<keyword id="KW-0227">DNA damage</keyword>
<keyword id="KW-0233">DNA recombination</keyword>
<keyword id="KW-0234">DNA repair</keyword>
<keyword id="KW-0238">DNA-binding</keyword>
<keyword id="KW-0255">Endonuclease</keyword>
<keyword id="KW-0378">Hydrolase</keyword>
<keyword id="KW-0460">Magnesium</keyword>
<keyword id="KW-0479">Metal-binding</keyword>
<keyword id="KW-0540">Nuclease</keyword>
<keyword id="KW-1185">Reference proteome</keyword>
<feature type="chain" id="PRO_0000225160" description="Crossover junction endodeoxyribonuclease RuvC">
    <location>
        <begin position="1"/>
        <end position="173"/>
    </location>
</feature>
<feature type="active site" evidence="1">
    <location>
        <position position="8"/>
    </location>
</feature>
<feature type="active site" evidence="1">
    <location>
        <position position="67"/>
    </location>
</feature>
<feature type="active site" evidence="1">
    <location>
        <position position="139"/>
    </location>
</feature>
<feature type="binding site" evidence="1">
    <location>
        <position position="8"/>
    </location>
    <ligand>
        <name>Mg(2+)</name>
        <dbReference type="ChEBI" id="CHEBI:18420"/>
        <label>1</label>
    </ligand>
</feature>
<feature type="binding site" evidence="1">
    <location>
        <position position="67"/>
    </location>
    <ligand>
        <name>Mg(2+)</name>
        <dbReference type="ChEBI" id="CHEBI:18420"/>
        <label>2</label>
    </ligand>
</feature>
<feature type="binding site" evidence="1">
    <location>
        <position position="139"/>
    </location>
    <ligand>
        <name>Mg(2+)</name>
        <dbReference type="ChEBI" id="CHEBI:18420"/>
        <label>1</label>
    </ligand>
</feature>
<name>RUVC_PHOPR</name>
<proteinExistence type="inferred from homology"/>
<comment type="function">
    <text evidence="1">The RuvA-RuvB-RuvC complex processes Holliday junction (HJ) DNA during genetic recombination and DNA repair. Endonuclease that resolves HJ intermediates. Cleaves cruciform DNA by making single-stranded nicks across the HJ at symmetrical positions within the homologous arms, yielding a 5'-phosphate and a 3'-hydroxyl group; requires a central core of homology in the junction. The consensus cleavage sequence is 5'-(A/T)TT(C/G)-3'. Cleavage occurs on the 3'-side of the TT dinucleotide at the point of strand exchange. HJ branch migration catalyzed by RuvA-RuvB allows RuvC to scan DNA until it finds its consensus sequence, where it cleaves and resolves the cruciform DNA.</text>
</comment>
<comment type="catalytic activity">
    <reaction evidence="1">
        <text>Endonucleolytic cleavage at a junction such as a reciprocal single-stranded crossover between two homologous DNA duplexes (Holliday junction).</text>
        <dbReference type="EC" id="3.1.21.10"/>
    </reaction>
</comment>
<comment type="cofactor">
    <cofactor evidence="1">
        <name>Mg(2+)</name>
        <dbReference type="ChEBI" id="CHEBI:18420"/>
    </cofactor>
    <text evidence="1">Binds 2 Mg(2+) ion per subunit.</text>
</comment>
<comment type="subunit">
    <text evidence="1">Homodimer which binds Holliday junction (HJ) DNA. The HJ becomes 2-fold symmetrical on binding to RuvC with unstacked arms; it has a different conformation from HJ DNA in complex with RuvA. In the full resolvosome a probable DNA-RuvA(4)-RuvB(12)-RuvC(2) complex forms which resolves the HJ.</text>
</comment>
<comment type="subcellular location">
    <subcellularLocation>
        <location evidence="1">Cytoplasm</location>
    </subcellularLocation>
</comment>
<comment type="similarity">
    <text evidence="1">Belongs to the RuvC family.</text>
</comment>
<sequence>MTIILGIDPGSRITGYGVIRQVGRNLEYLGSGCIRTSAEDIPGRLKQIYAGVSEVITQFQPDTFAIEEVFMGKNASSALKLGQARGSAIVAAVNADLPVSEYAARLIKQAVVGTGAADKAQVQHMVCSVLKLPGKPQADAADALAVAICHAHTHKTLIAMSGKASSARRGRYR</sequence>
<accession>Q6LT51</accession>
<reference key="1">
    <citation type="journal article" date="2005" name="Science">
        <title>Life at depth: Photobacterium profundum genome sequence and expression analysis.</title>
        <authorList>
            <person name="Vezzi A."/>
            <person name="Campanaro S."/>
            <person name="D'Angelo M."/>
            <person name="Simonato F."/>
            <person name="Vitulo N."/>
            <person name="Lauro F.M."/>
            <person name="Cestaro A."/>
            <person name="Malacrida G."/>
            <person name="Simionati B."/>
            <person name="Cannata N."/>
            <person name="Romualdi C."/>
            <person name="Bartlett D.H."/>
            <person name="Valle G."/>
        </authorList>
    </citation>
    <scope>NUCLEOTIDE SEQUENCE [LARGE SCALE GENOMIC DNA]</scope>
    <source>
        <strain>ATCC BAA-1253 / SS9</strain>
    </source>
</reference>
<organism>
    <name type="scientific">Photobacterium profundum (strain SS9)</name>
    <dbReference type="NCBI Taxonomy" id="298386"/>
    <lineage>
        <taxon>Bacteria</taxon>
        <taxon>Pseudomonadati</taxon>
        <taxon>Pseudomonadota</taxon>
        <taxon>Gammaproteobacteria</taxon>
        <taxon>Vibrionales</taxon>
        <taxon>Vibrionaceae</taxon>
        <taxon>Photobacterium</taxon>
    </lineage>
</organism>
<protein>
    <recommendedName>
        <fullName evidence="1">Crossover junction endodeoxyribonuclease RuvC</fullName>
        <ecNumber evidence="1">3.1.21.10</ecNumber>
    </recommendedName>
    <alternativeName>
        <fullName evidence="1">Holliday junction nuclease RuvC</fullName>
    </alternativeName>
    <alternativeName>
        <fullName evidence="1">Holliday junction resolvase RuvC</fullName>
    </alternativeName>
</protein>